<reference key="1">
    <citation type="journal article" date="2009" name="Mol. Biol. Evol.">
        <title>Molecular evolution, functional variation, and proposed nomenclature of the gene family that includes sphingomyelinase D in sicariid spider venoms.</title>
        <authorList>
            <person name="Binford G.J."/>
            <person name="Bodner M.R."/>
            <person name="Cordes M.H."/>
            <person name="Baldwin K.L."/>
            <person name="Rynerson M.R."/>
            <person name="Burns S.N."/>
            <person name="Zobel-Thropp P.A."/>
        </authorList>
    </citation>
    <scope>NUCLEOTIDE SEQUENCE [MRNA]</scope>
    <scope>NOMENCLATURE</scope>
    <source>
        <tissue>Venom gland</tissue>
    </source>
</reference>
<keyword id="KW-0204">Cytolysis</keyword>
<keyword id="KW-1061">Dermonecrotic toxin</keyword>
<keyword id="KW-1015">Disulfide bond</keyword>
<keyword id="KW-0354">Hemolysis</keyword>
<keyword id="KW-0442">Lipid degradation</keyword>
<keyword id="KW-0443">Lipid metabolism</keyword>
<keyword id="KW-0456">Lyase</keyword>
<keyword id="KW-0460">Magnesium</keyword>
<keyword id="KW-0479">Metal-binding</keyword>
<keyword id="KW-0964">Secreted</keyword>
<keyword id="KW-0800">Toxin</keyword>
<feature type="chain" id="PRO_0000392729" description="Dermonecrotic toxin LhSicTox-alphaIA1i">
    <location>
        <begin position="1" status="less than"/>
        <end position="273"/>
    </location>
</feature>
<feature type="active site" evidence="5">
    <location>
        <position position="5"/>
    </location>
</feature>
<feature type="active site" description="Nucleophile" evidence="5">
    <location>
        <position position="41"/>
    </location>
</feature>
<feature type="binding site" evidence="5">
    <location>
        <position position="25"/>
    </location>
    <ligand>
        <name>Mg(2+)</name>
        <dbReference type="ChEBI" id="CHEBI:18420"/>
    </ligand>
</feature>
<feature type="binding site" evidence="5">
    <location>
        <position position="27"/>
    </location>
    <ligand>
        <name>Mg(2+)</name>
        <dbReference type="ChEBI" id="CHEBI:18420"/>
    </ligand>
</feature>
<feature type="binding site" evidence="5">
    <location>
        <position position="85"/>
    </location>
    <ligand>
        <name>Mg(2+)</name>
        <dbReference type="ChEBI" id="CHEBI:18420"/>
    </ligand>
</feature>
<feature type="disulfide bond" evidence="3">
    <location>
        <begin position="45"/>
        <end position="51"/>
    </location>
</feature>
<feature type="disulfide bond" evidence="3">
    <location>
        <begin position="47"/>
        <end position="190"/>
    </location>
</feature>
<feature type="non-terminal residue">
    <location>
        <position position="1"/>
    </location>
</feature>
<comment type="function">
    <text evidence="1 3">Dermonecrotic toxins cleave the phosphodiester linkage between the phosphate and headgroup of certain phospholipids (sphingolipid and lysolipid substrates), forming an alcohol (often choline) and a cyclic phosphate (By similarity). This toxin acts on sphingomyelin (SM) (By similarity). It may also act on ceramide phosphoethanolamine (CPE), lysophosphatidylcholine (LPC) and lysophosphatidylethanolamine (LPE), but not on lysophosphatidylserine (LPS), and lysophosphatidylglycerol (LPG) (By similarity). It acts by transphosphatidylation, releasing exclusively cyclic phosphate products as second products (By similarity). Induces dermonecrosis, hemolysis, increased vascular permeability, edema, inflammatory response, and platelet aggregation (By similarity).</text>
</comment>
<comment type="catalytic activity">
    <reaction evidence="1">
        <text>an N-(acyl)-sphingosylphosphocholine = an N-(acyl)-sphingosyl-1,3-cyclic phosphate + choline</text>
        <dbReference type="Rhea" id="RHEA:60652"/>
        <dbReference type="ChEBI" id="CHEBI:15354"/>
        <dbReference type="ChEBI" id="CHEBI:64583"/>
        <dbReference type="ChEBI" id="CHEBI:143892"/>
    </reaction>
</comment>
<comment type="catalytic activity">
    <reaction evidence="1">
        <text>an N-(acyl)-sphingosylphosphoethanolamine = an N-(acyl)-sphingosyl-1,3-cyclic phosphate + ethanolamine</text>
        <dbReference type="Rhea" id="RHEA:60648"/>
        <dbReference type="ChEBI" id="CHEBI:57603"/>
        <dbReference type="ChEBI" id="CHEBI:143891"/>
        <dbReference type="ChEBI" id="CHEBI:143892"/>
    </reaction>
</comment>
<comment type="catalytic activity">
    <reaction evidence="1">
        <text>a 1-acyl-sn-glycero-3-phosphocholine = a 1-acyl-sn-glycero-2,3-cyclic phosphate + choline</text>
        <dbReference type="Rhea" id="RHEA:60700"/>
        <dbReference type="ChEBI" id="CHEBI:15354"/>
        <dbReference type="ChEBI" id="CHEBI:58168"/>
        <dbReference type="ChEBI" id="CHEBI:143947"/>
    </reaction>
</comment>
<comment type="catalytic activity">
    <reaction evidence="1">
        <text>a 1-acyl-sn-glycero-3-phosphoethanolamine = a 1-acyl-sn-glycero-2,3-cyclic phosphate + ethanolamine</text>
        <dbReference type="Rhea" id="RHEA:60704"/>
        <dbReference type="ChEBI" id="CHEBI:57603"/>
        <dbReference type="ChEBI" id="CHEBI:64381"/>
        <dbReference type="ChEBI" id="CHEBI:143947"/>
    </reaction>
</comment>
<comment type="cofactor">
    <cofactor evidence="5">
        <name>Mg(2+)</name>
        <dbReference type="ChEBI" id="CHEBI:18420"/>
    </cofactor>
    <text evidence="5">Binds 1 Mg(2+) ion per subunit.</text>
</comment>
<comment type="subcellular location">
    <subcellularLocation>
        <location evidence="8">Secreted</location>
    </subcellularLocation>
</comment>
<comment type="tissue specificity">
    <text evidence="8">Expressed by the venom gland.</text>
</comment>
<comment type="similarity">
    <text evidence="7">Belongs to the arthropod phospholipase D family. Class II subfamily.</text>
</comment>
<comment type="caution">
    <text evidence="1 2 4">The most common activity assay for dermonecrotic toxins detects enzymatic activity by monitoring choline release from substrate. Liberation of choline from sphingomyelin (SM) or lysophosphatidylcholine (LPC) is commonly assumed to result from substrate hydrolysis, giving either ceramide-1-phosphate (C1P) or lysophosphatidic acid (LPA), respectively, as a second product. However, two studies from Lajoie and colleagues (2013 and 2015) report the observation of exclusive formation of cyclic phosphate products as second products, resulting from intramolecular transphosphatidylation. Cyclic phosphates have vastly different biological properties from their monoester counterparts, and they may be relevant to the pathology of brown spider envenomation.</text>
</comment>
<sequence length="273" mass="30385">LDMGHMVNAIGQIDEFVNLGANSIETDVSFDSSANPEYTYHGIPCDCGRNCKKWENFNDFLKGLRSATTPGNSKYKEKLVLVVFDLKTGSLYDNQANDAGKKLAKNLLQHYWNNGNNGGRAYIVLSIPDLNHYPLIKGFTDTLKQEGHPELLDKLGYDFSGNDAIGDVAKAYKKAGVSGHVWQSDGITNCLLRGLTRVKEAVANRDSGNGYINKVYYWTVDKRATTRDALDAGVDGIMTNYPDVITDVLNEAAYKSKFRVATYEDNPWETFKK</sequence>
<protein>
    <recommendedName>
        <fullName evidence="6">Dermonecrotic toxin LhSicTox-alphaIA1i</fullName>
        <ecNumber evidence="4">4.6.1.-</ecNumber>
    </recommendedName>
    <alternativeName>
        <fullName>Phospholipase D</fullName>
        <shortName>PLD</shortName>
    </alternativeName>
    <alternativeName>
        <fullName>Sphingomyelin phosphodiesterase D</fullName>
        <shortName>SMD</shortName>
        <shortName>SMase D</shortName>
        <shortName>Sphingomyelinase D</shortName>
    </alternativeName>
</protein>
<name>A1H1_LOXHI</name>
<accession>C0JAT4</accession>
<organism>
    <name type="scientific">Loxosceles hirsuta</name>
    <name type="common">Recluse spider</name>
    <dbReference type="NCBI Taxonomy" id="571525"/>
    <lineage>
        <taxon>Eukaryota</taxon>
        <taxon>Metazoa</taxon>
        <taxon>Ecdysozoa</taxon>
        <taxon>Arthropoda</taxon>
        <taxon>Chelicerata</taxon>
        <taxon>Arachnida</taxon>
        <taxon>Araneae</taxon>
        <taxon>Araneomorphae</taxon>
        <taxon>Haplogynae</taxon>
        <taxon>Scytodoidea</taxon>
        <taxon>Sicariidae</taxon>
        <taxon>Loxosceles</taxon>
    </lineage>
</organism>
<evidence type="ECO:0000250" key="1">
    <source>
        <dbReference type="UniProtKB" id="A0A0D4WTV1"/>
    </source>
</evidence>
<evidence type="ECO:0000250" key="2">
    <source>
        <dbReference type="UniProtKB" id="A0A0D4WV12"/>
    </source>
</evidence>
<evidence type="ECO:0000250" key="3">
    <source>
        <dbReference type="UniProtKB" id="P0CE80"/>
    </source>
</evidence>
<evidence type="ECO:0000250" key="4">
    <source>
        <dbReference type="UniProtKB" id="Q4ZFU2"/>
    </source>
</evidence>
<evidence type="ECO:0000250" key="5">
    <source>
        <dbReference type="UniProtKB" id="Q8I914"/>
    </source>
</evidence>
<evidence type="ECO:0000303" key="6">
    <source>
    </source>
</evidence>
<evidence type="ECO:0000305" key="7"/>
<evidence type="ECO:0000305" key="8">
    <source>
    </source>
</evidence>
<dbReference type="EC" id="4.6.1.-" evidence="4"/>
<dbReference type="EMBL" id="FJ171369">
    <property type="protein sequence ID" value="ACN48865.1"/>
    <property type="molecule type" value="mRNA"/>
</dbReference>
<dbReference type="SMR" id="C0JAT4"/>
<dbReference type="GO" id="GO:0005576">
    <property type="term" value="C:extracellular region"/>
    <property type="evidence" value="ECO:0007669"/>
    <property type="project" value="UniProtKB-SubCell"/>
</dbReference>
<dbReference type="GO" id="GO:0016829">
    <property type="term" value="F:lyase activity"/>
    <property type="evidence" value="ECO:0007669"/>
    <property type="project" value="UniProtKB-KW"/>
</dbReference>
<dbReference type="GO" id="GO:0046872">
    <property type="term" value="F:metal ion binding"/>
    <property type="evidence" value="ECO:0007669"/>
    <property type="project" value="UniProtKB-KW"/>
</dbReference>
<dbReference type="GO" id="GO:0008081">
    <property type="term" value="F:phosphoric diester hydrolase activity"/>
    <property type="evidence" value="ECO:0007669"/>
    <property type="project" value="InterPro"/>
</dbReference>
<dbReference type="GO" id="GO:0090729">
    <property type="term" value="F:toxin activity"/>
    <property type="evidence" value="ECO:0007669"/>
    <property type="project" value="UniProtKB-KW"/>
</dbReference>
<dbReference type="GO" id="GO:0031640">
    <property type="term" value="P:killing of cells of another organism"/>
    <property type="evidence" value="ECO:0007669"/>
    <property type="project" value="UniProtKB-KW"/>
</dbReference>
<dbReference type="GO" id="GO:0016042">
    <property type="term" value="P:lipid catabolic process"/>
    <property type="evidence" value="ECO:0007669"/>
    <property type="project" value="UniProtKB-KW"/>
</dbReference>
<dbReference type="CDD" id="cd08576">
    <property type="entry name" value="GDPD_like_SMaseD_PLD"/>
    <property type="match status" value="1"/>
</dbReference>
<dbReference type="Gene3D" id="3.20.20.190">
    <property type="entry name" value="Phosphatidylinositol (PI) phosphodiesterase"/>
    <property type="match status" value="1"/>
</dbReference>
<dbReference type="InterPro" id="IPR017946">
    <property type="entry name" value="PLC-like_Pdiesterase_TIM-brl"/>
</dbReference>
<dbReference type="Pfam" id="PF13653">
    <property type="entry name" value="GDPD_2"/>
    <property type="match status" value="1"/>
</dbReference>
<dbReference type="SUPFAM" id="SSF51695">
    <property type="entry name" value="PLC-like phosphodiesterases"/>
    <property type="match status" value="1"/>
</dbReference>
<proteinExistence type="evidence at transcript level"/>